<name>SUCC_PARL1</name>
<reference key="1">
    <citation type="journal article" date="2011" name="Stand. Genomic Sci.">
        <title>Complete genome sequence of Parvibaculum lavamentivorans type strain (DS-1(T)).</title>
        <authorList>
            <person name="Schleheck D."/>
            <person name="Weiss M."/>
            <person name="Pitluck S."/>
            <person name="Bruce D."/>
            <person name="Land M.L."/>
            <person name="Han S."/>
            <person name="Saunders E."/>
            <person name="Tapia R."/>
            <person name="Detter C."/>
            <person name="Brettin T."/>
            <person name="Han J."/>
            <person name="Woyke T."/>
            <person name="Goodwin L."/>
            <person name="Pennacchio L."/>
            <person name="Nolan M."/>
            <person name="Cook A.M."/>
            <person name="Kjelleberg S."/>
            <person name="Thomas T."/>
        </authorList>
    </citation>
    <scope>NUCLEOTIDE SEQUENCE [LARGE SCALE GENOMIC DNA]</scope>
    <source>
        <strain>DS-1 / DSM 13023 / NCIMB 13966</strain>
    </source>
</reference>
<feature type="chain" id="PRO_1000082150" description="Succinate--CoA ligase [ADP-forming] subunit beta">
    <location>
        <begin position="1"/>
        <end position="389"/>
    </location>
</feature>
<feature type="domain" description="ATP-grasp" evidence="1">
    <location>
        <begin position="9"/>
        <end position="244"/>
    </location>
</feature>
<feature type="binding site" evidence="1">
    <location>
        <position position="46"/>
    </location>
    <ligand>
        <name>ATP</name>
        <dbReference type="ChEBI" id="CHEBI:30616"/>
    </ligand>
</feature>
<feature type="binding site" evidence="1">
    <location>
        <begin position="53"/>
        <end position="55"/>
    </location>
    <ligand>
        <name>ATP</name>
        <dbReference type="ChEBI" id="CHEBI:30616"/>
    </ligand>
</feature>
<feature type="binding site" evidence="1">
    <location>
        <position position="99"/>
    </location>
    <ligand>
        <name>ATP</name>
        <dbReference type="ChEBI" id="CHEBI:30616"/>
    </ligand>
</feature>
<feature type="binding site" evidence="1">
    <location>
        <position position="102"/>
    </location>
    <ligand>
        <name>ATP</name>
        <dbReference type="ChEBI" id="CHEBI:30616"/>
    </ligand>
</feature>
<feature type="binding site" evidence="1">
    <location>
        <position position="107"/>
    </location>
    <ligand>
        <name>ATP</name>
        <dbReference type="ChEBI" id="CHEBI:30616"/>
    </ligand>
</feature>
<feature type="binding site" evidence="1">
    <location>
        <position position="199"/>
    </location>
    <ligand>
        <name>Mg(2+)</name>
        <dbReference type="ChEBI" id="CHEBI:18420"/>
    </ligand>
</feature>
<feature type="binding site" evidence="1">
    <location>
        <position position="213"/>
    </location>
    <ligand>
        <name>Mg(2+)</name>
        <dbReference type="ChEBI" id="CHEBI:18420"/>
    </ligand>
</feature>
<feature type="binding site" evidence="1">
    <location>
        <position position="264"/>
    </location>
    <ligand>
        <name>substrate</name>
        <note>ligand shared with subunit alpha</note>
    </ligand>
</feature>
<feature type="binding site" evidence="1">
    <location>
        <begin position="321"/>
        <end position="323"/>
    </location>
    <ligand>
        <name>substrate</name>
        <note>ligand shared with subunit alpha</note>
    </ligand>
</feature>
<sequence>MNIHEYQAKAVLAKYGVPVPSGHAAFTPEEAVAKAKELGGPVWVVKAQIHAGGRGKAGGVKVVKSLDDVKKEATRLIGSTLVTHQTGPDGKEVNRLYIEDGSSISRELYLSILVDRATSRVSFIVSTEGGMDIEEVAKKTPEKILSFSVDPASGISGFHGRKVAYALGLEGDQVKQGVALIEKLYKAFVTEDMSMLEINPLVVTGEGNLLCLDAKVNFDSNALYRHKDIVELRDLTEEDPAEVEASKYDLNYIKLDGKIGCMVNGAGLAMATMDIIKLYGSEPANFLDVGGGATKEKVTAAFKIILSDPSVEGILVNIFGGIMRCDIIAEGVIAAAKEVSLSVPLVVRLEGTNVDLGKKIMAESGLPIISADNLADAAEKIVKAVKEAA</sequence>
<comment type="function">
    <text evidence="1">Succinyl-CoA synthetase functions in the citric acid cycle (TCA), coupling the hydrolysis of succinyl-CoA to the synthesis of either ATP or GTP and thus represents the only step of substrate-level phosphorylation in the TCA. The beta subunit provides nucleotide specificity of the enzyme and binds the substrate succinate, while the binding sites for coenzyme A and phosphate are found in the alpha subunit.</text>
</comment>
<comment type="catalytic activity">
    <reaction evidence="1">
        <text>succinate + ATP + CoA = succinyl-CoA + ADP + phosphate</text>
        <dbReference type="Rhea" id="RHEA:17661"/>
        <dbReference type="ChEBI" id="CHEBI:30031"/>
        <dbReference type="ChEBI" id="CHEBI:30616"/>
        <dbReference type="ChEBI" id="CHEBI:43474"/>
        <dbReference type="ChEBI" id="CHEBI:57287"/>
        <dbReference type="ChEBI" id="CHEBI:57292"/>
        <dbReference type="ChEBI" id="CHEBI:456216"/>
        <dbReference type="EC" id="6.2.1.5"/>
    </reaction>
    <physiologicalReaction direction="right-to-left" evidence="1">
        <dbReference type="Rhea" id="RHEA:17663"/>
    </physiologicalReaction>
</comment>
<comment type="catalytic activity">
    <reaction evidence="1">
        <text>GTP + succinate + CoA = succinyl-CoA + GDP + phosphate</text>
        <dbReference type="Rhea" id="RHEA:22120"/>
        <dbReference type="ChEBI" id="CHEBI:30031"/>
        <dbReference type="ChEBI" id="CHEBI:37565"/>
        <dbReference type="ChEBI" id="CHEBI:43474"/>
        <dbReference type="ChEBI" id="CHEBI:57287"/>
        <dbReference type="ChEBI" id="CHEBI:57292"/>
        <dbReference type="ChEBI" id="CHEBI:58189"/>
    </reaction>
    <physiologicalReaction direction="right-to-left" evidence="1">
        <dbReference type="Rhea" id="RHEA:22122"/>
    </physiologicalReaction>
</comment>
<comment type="cofactor">
    <cofactor evidence="1">
        <name>Mg(2+)</name>
        <dbReference type="ChEBI" id="CHEBI:18420"/>
    </cofactor>
    <text evidence="1">Binds 1 Mg(2+) ion per subunit.</text>
</comment>
<comment type="pathway">
    <text evidence="1">Carbohydrate metabolism; tricarboxylic acid cycle; succinate from succinyl-CoA (ligase route): step 1/1.</text>
</comment>
<comment type="subunit">
    <text evidence="1">Heterotetramer of two alpha and two beta subunits.</text>
</comment>
<comment type="similarity">
    <text evidence="1">Belongs to the succinate/malate CoA ligase beta subunit family.</text>
</comment>
<organism>
    <name type="scientific">Parvibaculum lavamentivorans (strain DS-1 / DSM 13023 / NCIMB 13966)</name>
    <dbReference type="NCBI Taxonomy" id="402881"/>
    <lineage>
        <taxon>Bacteria</taxon>
        <taxon>Pseudomonadati</taxon>
        <taxon>Pseudomonadota</taxon>
        <taxon>Alphaproteobacteria</taxon>
        <taxon>Hyphomicrobiales</taxon>
        <taxon>Parvibaculaceae</taxon>
        <taxon>Parvibaculum</taxon>
    </lineage>
</organism>
<dbReference type="EC" id="6.2.1.5" evidence="1"/>
<dbReference type="EMBL" id="CP000774">
    <property type="protein sequence ID" value="ABS63072.1"/>
    <property type="molecule type" value="Genomic_DNA"/>
</dbReference>
<dbReference type="RefSeq" id="WP_012110352.1">
    <property type="nucleotide sequence ID" value="NC_009719.1"/>
</dbReference>
<dbReference type="SMR" id="A7HT39"/>
<dbReference type="STRING" id="402881.Plav_1452"/>
<dbReference type="KEGG" id="pla:Plav_1452"/>
<dbReference type="eggNOG" id="COG0045">
    <property type="taxonomic scope" value="Bacteria"/>
</dbReference>
<dbReference type="HOGENOM" id="CLU_037430_0_2_5"/>
<dbReference type="OrthoDB" id="9802602at2"/>
<dbReference type="UniPathway" id="UPA00223">
    <property type="reaction ID" value="UER00999"/>
</dbReference>
<dbReference type="Proteomes" id="UP000006377">
    <property type="component" value="Chromosome"/>
</dbReference>
<dbReference type="GO" id="GO:0005829">
    <property type="term" value="C:cytosol"/>
    <property type="evidence" value="ECO:0007669"/>
    <property type="project" value="TreeGrafter"/>
</dbReference>
<dbReference type="GO" id="GO:0042709">
    <property type="term" value="C:succinate-CoA ligase complex"/>
    <property type="evidence" value="ECO:0007669"/>
    <property type="project" value="TreeGrafter"/>
</dbReference>
<dbReference type="GO" id="GO:0005524">
    <property type="term" value="F:ATP binding"/>
    <property type="evidence" value="ECO:0007669"/>
    <property type="project" value="UniProtKB-UniRule"/>
</dbReference>
<dbReference type="GO" id="GO:0000287">
    <property type="term" value="F:magnesium ion binding"/>
    <property type="evidence" value="ECO:0007669"/>
    <property type="project" value="UniProtKB-UniRule"/>
</dbReference>
<dbReference type="GO" id="GO:0004775">
    <property type="term" value="F:succinate-CoA ligase (ADP-forming) activity"/>
    <property type="evidence" value="ECO:0007669"/>
    <property type="project" value="UniProtKB-UniRule"/>
</dbReference>
<dbReference type="GO" id="GO:0004776">
    <property type="term" value="F:succinate-CoA ligase (GDP-forming) activity"/>
    <property type="evidence" value="ECO:0007669"/>
    <property type="project" value="RHEA"/>
</dbReference>
<dbReference type="GO" id="GO:0006104">
    <property type="term" value="P:succinyl-CoA metabolic process"/>
    <property type="evidence" value="ECO:0007669"/>
    <property type="project" value="TreeGrafter"/>
</dbReference>
<dbReference type="GO" id="GO:0006099">
    <property type="term" value="P:tricarboxylic acid cycle"/>
    <property type="evidence" value="ECO:0007669"/>
    <property type="project" value="UniProtKB-UniRule"/>
</dbReference>
<dbReference type="FunFam" id="3.30.1490.20:FF:000002">
    <property type="entry name" value="Succinate--CoA ligase [ADP-forming] subunit beta"/>
    <property type="match status" value="1"/>
</dbReference>
<dbReference type="FunFam" id="3.30.470.20:FF:000002">
    <property type="entry name" value="Succinate--CoA ligase [ADP-forming] subunit beta"/>
    <property type="match status" value="1"/>
</dbReference>
<dbReference type="FunFam" id="3.40.50.261:FF:000001">
    <property type="entry name" value="Succinate--CoA ligase [ADP-forming] subunit beta"/>
    <property type="match status" value="1"/>
</dbReference>
<dbReference type="Gene3D" id="3.30.1490.20">
    <property type="entry name" value="ATP-grasp fold, A domain"/>
    <property type="match status" value="1"/>
</dbReference>
<dbReference type="Gene3D" id="3.30.470.20">
    <property type="entry name" value="ATP-grasp fold, B domain"/>
    <property type="match status" value="1"/>
</dbReference>
<dbReference type="Gene3D" id="3.40.50.261">
    <property type="entry name" value="Succinyl-CoA synthetase domains"/>
    <property type="match status" value="1"/>
</dbReference>
<dbReference type="HAMAP" id="MF_00558">
    <property type="entry name" value="Succ_CoA_beta"/>
    <property type="match status" value="1"/>
</dbReference>
<dbReference type="InterPro" id="IPR011761">
    <property type="entry name" value="ATP-grasp"/>
</dbReference>
<dbReference type="InterPro" id="IPR013650">
    <property type="entry name" value="ATP-grasp_succ-CoA_synth-type"/>
</dbReference>
<dbReference type="InterPro" id="IPR013815">
    <property type="entry name" value="ATP_grasp_subdomain_1"/>
</dbReference>
<dbReference type="InterPro" id="IPR005811">
    <property type="entry name" value="SUCC_ACL_C"/>
</dbReference>
<dbReference type="InterPro" id="IPR005809">
    <property type="entry name" value="Succ_CoA_ligase-like_bsu"/>
</dbReference>
<dbReference type="InterPro" id="IPR016102">
    <property type="entry name" value="Succinyl-CoA_synth-like"/>
</dbReference>
<dbReference type="NCBIfam" id="NF001913">
    <property type="entry name" value="PRK00696.1"/>
    <property type="match status" value="1"/>
</dbReference>
<dbReference type="NCBIfam" id="TIGR01016">
    <property type="entry name" value="sucCoAbeta"/>
    <property type="match status" value="1"/>
</dbReference>
<dbReference type="PANTHER" id="PTHR11815:SF10">
    <property type="entry name" value="SUCCINATE--COA LIGASE [GDP-FORMING] SUBUNIT BETA, MITOCHONDRIAL"/>
    <property type="match status" value="1"/>
</dbReference>
<dbReference type="PANTHER" id="PTHR11815">
    <property type="entry name" value="SUCCINYL-COA SYNTHETASE BETA CHAIN"/>
    <property type="match status" value="1"/>
</dbReference>
<dbReference type="Pfam" id="PF08442">
    <property type="entry name" value="ATP-grasp_2"/>
    <property type="match status" value="1"/>
</dbReference>
<dbReference type="Pfam" id="PF00549">
    <property type="entry name" value="Ligase_CoA"/>
    <property type="match status" value="1"/>
</dbReference>
<dbReference type="PIRSF" id="PIRSF001554">
    <property type="entry name" value="SucCS_beta"/>
    <property type="match status" value="1"/>
</dbReference>
<dbReference type="SUPFAM" id="SSF56059">
    <property type="entry name" value="Glutathione synthetase ATP-binding domain-like"/>
    <property type="match status" value="1"/>
</dbReference>
<dbReference type="SUPFAM" id="SSF52210">
    <property type="entry name" value="Succinyl-CoA synthetase domains"/>
    <property type="match status" value="1"/>
</dbReference>
<dbReference type="PROSITE" id="PS50975">
    <property type="entry name" value="ATP_GRASP"/>
    <property type="match status" value="1"/>
</dbReference>
<accession>A7HT39</accession>
<keyword id="KW-0067">ATP-binding</keyword>
<keyword id="KW-0436">Ligase</keyword>
<keyword id="KW-0460">Magnesium</keyword>
<keyword id="KW-0479">Metal-binding</keyword>
<keyword id="KW-0547">Nucleotide-binding</keyword>
<keyword id="KW-1185">Reference proteome</keyword>
<keyword id="KW-0816">Tricarboxylic acid cycle</keyword>
<protein>
    <recommendedName>
        <fullName evidence="1">Succinate--CoA ligase [ADP-forming] subunit beta</fullName>
        <ecNumber evidence="1">6.2.1.5</ecNumber>
    </recommendedName>
    <alternativeName>
        <fullName evidence="1">Succinyl-CoA synthetase subunit beta</fullName>
        <shortName evidence="1">SCS-beta</shortName>
    </alternativeName>
</protein>
<gene>
    <name evidence="1" type="primary">sucC</name>
    <name type="ordered locus">Plav_1452</name>
</gene>
<evidence type="ECO:0000255" key="1">
    <source>
        <dbReference type="HAMAP-Rule" id="MF_00558"/>
    </source>
</evidence>
<proteinExistence type="inferred from homology"/>